<feature type="chain" id="PRO_0000324357" description="Capsid protein">
    <location>
        <begin position="1"/>
        <end position="185"/>
    </location>
</feature>
<feature type="repeat" description="1; half-length">
    <location>
        <begin position="157"/>
        <end position="163"/>
    </location>
</feature>
<feature type="repeat" description="2">
    <location>
        <begin position="164"/>
        <end position="171"/>
    </location>
</feature>
<feature type="repeat" description="3">
    <location>
        <begin position="172"/>
        <end position="179"/>
    </location>
</feature>
<feature type="region of interest" description="Disordered" evidence="2">
    <location>
        <begin position="135"/>
        <end position="185"/>
    </location>
</feature>
<feature type="region of interest" description="3 X 8 AA repeats of S-P-R-R-R-[PR]-S-Q">
    <location>
        <begin position="157"/>
        <end position="179"/>
    </location>
</feature>
<feature type="region of interest" description="RNA binding" evidence="1">
    <location>
        <begin position="179"/>
        <end position="185"/>
    </location>
</feature>
<feature type="short sequence motif" description="Bipartite nuclear localization signal" evidence="1">
    <location>
        <begin position="160"/>
        <end position="177"/>
    </location>
</feature>
<feature type="compositionally biased region" description="Basic residues" evidence="2">
    <location>
        <begin position="149"/>
        <end position="178"/>
    </location>
</feature>
<feature type="modified residue" description="Phosphoserine; by host" evidence="1">
    <location>
        <position position="157"/>
    </location>
</feature>
<feature type="modified residue" description="Phosphoserine; by host" evidence="1">
    <location>
        <position position="164"/>
    </location>
</feature>
<feature type="modified residue" description="Phosphoserine; by host" evidence="1">
    <location>
        <position position="172"/>
    </location>
</feature>
<organism>
    <name type="scientific">Hepatitis B virus genotype A3 (isolate Cameroon/CMR711/1994)</name>
    <name type="common">HBV-A</name>
    <dbReference type="NCBI Taxonomy" id="489459"/>
    <lineage>
        <taxon>Viruses</taxon>
        <taxon>Riboviria</taxon>
        <taxon>Pararnavirae</taxon>
        <taxon>Artverviricota</taxon>
        <taxon>Revtraviricetes</taxon>
        <taxon>Blubervirales</taxon>
        <taxon>Hepadnaviridae</taxon>
        <taxon>Orthohepadnavirus</taxon>
        <taxon>Hepatitis B virus</taxon>
    </lineage>
</organism>
<name>CAPSD_HBVA9</name>
<sequence length="185" mass="21420">MDIDPYKEFGASVELLSFLPSDFFPSVRDLLDTSAALYREALESPEHCSPHHTALRQAILCWGELMTLATWVGNNLQDPASRDQVVNYVNTNMGLKIRQLLWFHISCLTFGRQTVLEYLVSFGVWIRTPPPYRPPNAPILSTLPETTVVRRRDRGRSPRRRTPSPRRRRSQSPRRRRSQSRESQC</sequence>
<keyword id="KW-0024">Alternative initiation</keyword>
<keyword id="KW-0167">Capsid protein</keyword>
<keyword id="KW-1176">Cytoplasmic inwards viral transport</keyword>
<keyword id="KW-0238">DNA-binding</keyword>
<keyword id="KW-1035">Host cytoplasm</keyword>
<keyword id="KW-0945">Host-virus interaction</keyword>
<keyword id="KW-1177">Microtubular inwards viral transport</keyword>
<keyword id="KW-0597">Phosphoprotein</keyword>
<keyword id="KW-0677">Repeat</keyword>
<keyword id="KW-0694">RNA-binding</keyword>
<keyword id="KW-1144">T=4 icosahedral capsid protein</keyword>
<keyword id="KW-1163">Viral penetration into host nucleus</keyword>
<keyword id="KW-0946">Virion</keyword>
<keyword id="KW-1160">Virus entry into host cell</keyword>
<gene>
    <name evidence="1" type="primary">C</name>
</gene>
<organismHost>
    <name type="scientific">Homo sapiens</name>
    <name type="common">Human</name>
    <dbReference type="NCBI Taxonomy" id="9606"/>
</organismHost>
<organismHost>
    <name type="scientific">Pan troglodytes</name>
    <name type="common">Chimpanzee</name>
    <dbReference type="NCBI Taxonomy" id="9598"/>
</organismHost>
<protein>
    <recommendedName>
        <fullName evidence="1">Capsid protein</fullName>
    </recommendedName>
    <alternativeName>
        <fullName evidence="1">Core antigen</fullName>
    </alternativeName>
    <alternativeName>
        <fullName evidence="1">Core protein</fullName>
    </alternativeName>
    <alternativeName>
        <fullName evidence="1">HBcAg</fullName>
    </alternativeName>
    <alternativeName>
        <fullName evidence="1">p21.5</fullName>
    </alternativeName>
</protein>
<dbReference type="EMBL" id="AB194952">
    <property type="protein sequence ID" value="BAE00096.1"/>
    <property type="status" value="ALT_INIT"/>
    <property type="molecule type" value="Genomic_DNA"/>
</dbReference>
<dbReference type="SMR" id="P0C698"/>
<dbReference type="Proteomes" id="UP000007912">
    <property type="component" value="Genome"/>
</dbReference>
<dbReference type="GO" id="GO:0043657">
    <property type="term" value="C:host cell"/>
    <property type="evidence" value="ECO:0007669"/>
    <property type="project" value="GOC"/>
</dbReference>
<dbReference type="GO" id="GO:0030430">
    <property type="term" value="C:host cell cytoplasm"/>
    <property type="evidence" value="ECO:0007669"/>
    <property type="project" value="UniProtKB-SubCell"/>
</dbReference>
<dbReference type="GO" id="GO:0039619">
    <property type="term" value="C:T=4 icosahedral viral capsid"/>
    <property type="evidence" value="ECO:0007669"/>
    <property type="project" value="UniProtKB-UniRule"/>
</dbReference>
<dbReference type="GO" id="GO:0003677">
    <property type="term" value="F:DNA binding"/>
    <property type="evidence" value="ECO:0007669"/>
    <property type="project" value="UniProtKB-UniRule"/>
</dbReference>
<dbReference type="GO" id="GO:0003723">
    <property type="term" value="F:RNA binding"/>
    <property type="evidence" value="ECO:0007669"/>
    <property type="project" value="UniProtKB-UniRule"/>
</dbReference>
<dbReference type="GO" id="GO:0005198">
    <property type="term" value="F:structural molecule activity"/>
    <property type="evidence" value="ECO:0007669"/>
    <property type="project" value="UniProtKB-UniRule"/>
</dbReference>
<dbReference type="GO" id="GO:0075521">
    <property type="term" value="P:microtubule-dependent intracellular transport of viral material towards nucleus"/>
    <property type="evidence" value="ECO:0007669"/>
    <property type="project" value="UniProtKB-UniRule"/>
</dbReference>
<dbReference type="GO" id="GO:0046718">
    <property type="term" value="P:symbiont entry into host cell"/>
    <property type="evidence" value="ECO:0007669"/>
    <property type="project" value="UniProtKB-UniRule"/>
</dbReference>
<dbReference type="GO" id="GO:0075732">
    <property type="term" value="P:viral penetration into host nucleus"/>
    <property type="evidence" value="ECO:0007669"/>
    <property type="project" value="UniProtKB-UniRule"/>
</dbReference>
<dbReference type="FunFam" id="1.10.4090.10:FF:000001">
    <property type="entry name" value="Capsid protein"/>
    <property type="match status" value="1"/>
</dbReference>
<dbReference type="Gene3D" id="1.10.4090.10">
    <property type="entry name" value="Viral capsid, core domain supefamily, Hepatitis B virus"/>
    <property type="match status" value="1"/>
</dbReference>
<dbReference type="HAMAP" id="MF_04076">
    <property type="entry name" value="HBV_HBEAG"/>
    <property type="match status" value="1"/>
</dbReference>
<dbReference type="InterPro" id="IPR002006">
    <property type="entry name" value="Hepatitis_core"/>
</dbReference>
<dbReference type="InterPro" id="IPR036459">
    <property type="entry name" value="Viral_capsid_core_dom_sf_HBV"/>
</dbReference>
<dbReference type="Pfam" id="PF00906">
    <property type="entry name" value="Hepatitis_core"/>
    <property type="match status" value="2"/>
</dbReference>
<dbReference type="SUPFAM" id="SSF47852">
    <property type="entry name" value="Hepatitis B viral capsid (hbcag)"/>
    <property type="match status" value="1"/>
</dbReference>
<evidence type="ECO:0000255" key="1">
    <source>
        <dbReference type="HAMAP-Rule" id="MF_04076"/>
    </source>
</evidence>
<evidence type="ECO:0000256" key="2">
    <source>
        <dbReference type="SAM" id="MobiDB-lite"/>
    </source>
</evidence>
<proteinExistence type="inferred from homology"/>
<reference key="1">
    <citation type="journal article" date="2005" name="J. Gen. Virol.">
        <title>A new subtype (subgenotype) Ac (A3) of hepatitis B virus and recombination between genotypes A and E in Cameroon.</title>
        <authorList>
            <person name="Kurbanov F."/>
            <person name="Tanaka Y."/>
            <person name="Fujiwara K."/>
            <person name="Sugauchi F."/>
            <person name="Mbanya D."/>
            <person name="Zekeng L."/>
            <person name="Ndembi N."/>
            <person name="Ngansop C."/>
            <person name="Kaptue L."/>
            <person name="Miura T."/>
            <person name="Ido E."/>
            <person name="Hayami M."/>
            <person name="Ichimura H."/>
            <person name="Mizokami M."/>
        </authorList>
    </citation>
    <scope>NUCLEOTIDE SEQUENCE [GENOMIC DNA]</scope>
</reference>
<comment type="function">
    <text evidence="1">Self assembles to form an icosahedral capsid. Most capsids appear to be large particles with an icosahedral symmetry of T=4 and consist of 240 copies of capsid protein, though a fraction forms smaller T=3 particles consisting of 180 capsid proteins. Entering capsids are transported along microtubules to the nucleus. Phosphorylation of the capsid is thought to induce exposure of nuclear localization signal in the C-terminal portion of the capsid protein that allows binding to the nuclear pore complex via the importin (karyopherin-) alpha and beta. Capsids are imported in intact form through the nuclear pore into the nuclear basket, where it probably binds NUP153. Only capsids that contain the mature viral genome can release the viral DNA and capsid protein into the nucleoplasm. Immature capsids get stuck in the basket. Capsids encapsulate the pre-genomic RNA and the P protein. Pre-genomic RNA is reverse-transcribed into DNA while the capsid is still in the cytoplasm. The capsid can then either be directed to the nucleus, providing more genomes for transcription, or bud through the endoplasmic reticulum to provide new virions.</text>
</comment>
<comment type="subunit">
    <text evidence="1">Homodimerizes, then multimerizes. Interacts with cytosol exposed regions of viral L glycoprotein present in the reticulum-to-Golgi compartment. Interacts with human FLNB. Phosphorylated form interacts with host importin alpha; this interaction depends on the exposure of the NLS, which itself depends upon genome maturation and/or phosphorylation of the capsid protein. Interacts with host NUP153.</text>
</comment>
<comment type="subcellular location">
    <subcellularLocation>
        <location evidence="1">Virion</location>
    </subcellularLocation>
    <subcellularLocation>
        <location evidence="1">Host cytoplasm</location>
    </subcellularLocation>
</comment>
<comment type="alternative products">
    <event type="alternative initiation"/>
    <isoform>
        <id>P0C698-1</id>
        <name>Capsid protein</name>
        <sequence type="displayed"/>
    </isoform>
    <isoform>
        <id>Q4R1S0-1</id>
        <name>External core antigen</name>
        <sequence type="external"/>
    </isoform>
</comment>
<comment type="PTM">
    <text evidence="1">Phosphorylated by host SRPK1, SRPK2, and maybe protein kinase C or GAPDH. Phosphorylation is critical for pregenomic RNA packaging. Protein kinase C phosphorylation is stimulated by HBx protein and may play a role in transport of the viral genome to the nucleus at the late step during the viral replication cycle.</text>
</comment>
<comment type="similarity">
    <text evidence="1">Belongs to the orthohepadnavirus core antigen family.</text>
</comment>
<comment type="sequence caution">
    <conflict type="erroneous initiation">
        <sequence resource="EMBL-CDS" id="BAE00096"/>
    </conflict>
</comment>
<accession>P0C698</accession>